<dbReference type="EMBL" id="AE014295">
    <property type="protein sequence ID" value="AAN24666.1"/>
    <property type="molecule type" value="Genomic_DNA"/>
</dbReference>
<dbReference type="RefSeq" id="NP_696030.1">
    <property type="nucleotide sequence ID" value="NC_004307.2"/>
</dbReference>
<dbReference type="RefSeq" id="WP_007052163.1">
    <property type="nucleotide sequence ID" value="NC_004307.2"/>
</dbReference>
<dbReference type="SMR" id="Q8G5Z8"/>
<dbReference type="STRING" id="206672.BL0853"/>
<dbReference type="EnsemblBacteria" id="AAN24666">
    <property type="protein sequence ID" value="AAN24666"/>
    <property type="gene ID" value="BL0853"/>
</dbReference>
<dbReference type="KEGG" id="blo:BL0853"/>
<dbReference type="PATRIC" id="fig|206672.9.peg.547"/>
<dbReference type="HOGENOM" id="CLU_075939_1_0_11"/>
<dbReference type="OrthoDB" id="5242980at2"/>
<dbReference type="PhylomeDB" id="Q8G5Z8"/>
<dbReference type="Proteomes" id="UP000000439">
    <property type="component" value="Chromosome"/>
</dbReference>
<dbReference type="GO" id="GO:0022625">
    <property type="term" value="C:cytosolic large ribosomal subunit"/>
    <property type="evidence" value="ECO:0007669"/>
    <property type="project" value="TreeGrafter"/>
</dbReference>
<dbReference type="GO" id="GO:0008097">
    <property type="term" value="F:5S rRNA binding"/>
    <property type="evidence" value="ECO:0007669"/>
    <property type="project" value="InterPro"/>
</dbReference>
<dbReference type="GO" id="GO:0003735">
    <property type="term" value="F:structural constituent of ribosome"/>
    <property type="evidence" value="ECO:0007669"/>
    <property type="project" value="InterPro"/>
</dbReference>
<dbReference type="GO" id="GO:0006412">
    <property type="term" value="P:translation"/>
    <property type="evidence" value="ECO:0007669"/>
    <property type="project" value="UniProtKB-UniRule"/>
</dbReference>
<dbReference type="CDD" id="cd00495">
    <property type="entry name" value="Ribosomal_L25_TL5_CTC"/>
    <property type="match status" value="1"/>
</dbReference>
<dbReference type="Gene3D" id="2.170.120.20">
    <property type="entry name" value="Ribosomal protein L25, beta domain"/>
    <property type="match status" value="1"/>
</dbReference>
<dbReference type="Gene3D" id="2.40.240.10">
    <property type="entry name" value="Ribosomal Protein L25, Chain P"/>
    <property type="match status" value="1"/>
</dbReference>
<dbReference type="HAMAP" id="MF_01334">
    <property type="entry name" value="Ribosomal_bL25_CTC"/>
    <property type="match status" value="1"/>
</dbReference>
<dbReference type="InterPro" id="IPR020056">
    <property type="entry name" value="Rbsml_bL25/Gln-tRNA_synth_N"/>
</dbReference>
<dbReference type="InterPro" id="IPR011035">
    <property type="entry name" value="Ribosomal_bL25/Gln-tRNA_synth"/>
</dbReference>
<dbReference type="InterPro" id="IPR020057">
    <property type="entry name" value="Ribosomal_bL25_b-dom"/>
</dbReference>
<dbReference type="InterPro" id="IPR037121">
    <property type="entry name" value="Ribosomal_bL25_C"/>
</dbReference>
<dbReference type="InterPro" id="IPR001021">
    <property type="entry name" value="Ribosomal_bL25_long"/>
</dbReference>
<dbReference type="InterPro" id="IPR029751">
    <property type="entry name" value="Ribosomal_L25_dom"/>
</dbReference>
<dbReference type="InterPro" id="IPR020930">
    <property type="entry name" value="Ribosomal_uL5_bac-type"/>
</dbReference>
<dbReference type="NCBIfam" id="TIGR00731">
    <property type="entry name" value="bL25_bact_ctc"/>
    <property type="match status" value="1"/>
</dbReference>
<dbReference type="NCBIfam" id="NF004131">
    <property type="entry name" value="PRK05618.2-1"/>
    <property type="match status" value="1"/>
</dbReference>
<dbReference type="PANTHER" id="PTHR33284">
    <property type="entry name" value="RIBOSOMAL PROTEIN L25/GLN-TRNA SYNTHETASE, ANTI-CODON-BINDING DOMAIN-CONTAINING PROTEIN"/>
    <property type="match status" value="1"/>
</dbReference>
<dbReference type="PANTHER" id="PTHR33284:SF1">
    <property type="entry name" value="RIBOSOMAL PROTEIN L25_GLN-TRNA SYNTHETASE, ANTI-CODON-BINDING DOMAIN-CONTAINING PROTEIN"/>
    <property type="match status" value="1"/>
</dbReference>
<dbReference type="Pfam" id="PF01386">
    <property type="entry name" value="Ribosomal_L25p"/>
    <property type="match status" value="1"/>
</dbReference>
<dbReference type="Pfam" id="PF14693">
    <property type="entry name" value="Ribosomal_TL5_C"/>
    <property type="match status" value="1"/>
</dbReference>
<dbReference type="SUPFAM" id="SSF50715">
    <property type="entry name" value="Ribosomal protein L25-like"/>
    <property type="match status" value="1"/>
</dbReference>
<reference key="1">
    <citation type="journal article" date="2002" name="Proc. Natl. Acad. Sci. U.S.A.">
        <title>The genome sequence of Bifidobacterium longum reflects its adaptation to the human gastrointestinal tract.</title>
        <authorList>
            <person name="Schell M.A."/>
            <person name="Karmirantzou M."/>
            <person name="Snel B."/>
            <person name="Vilanova D."/>
            <person name="Berger B."/>
            <person name="Pessi G."/>
            <person name="Zwahlen M.-C."/>
            <person name="Desiere F."/>
            <person name="Bork P."/>
            <person name="Delley M."/>
            <person name="Pridmore R.D."/>
            <person name="Arigoni F."/>
        </authorList>
    </citation>
    <scope>NUCLEOTIDE SEQUENCE [LARGE SCALE GENOMIC DNA]</scope>
    <source>
        <strain>NCC 2705</strain>
    </source>
</reference>
<feature type="chain" id="PRO_0000181517" description="Large ribosomal subunit protein bL25">
    <location>
        <begin position="1"/>
        <end position="206"/>
    </location>
</feature>
<feature type="region of interest" description="Disordered" evidence="2">
    <location>
        <begin position="168"/>
        <end position="206"/>
    </location>
</feature>
<feature type="compositionally biased region" description="Low complexity" evidence="2">
    <location>
        <begin position="184"/>
        <end position="206"/>
    </location>
</feature>
<protein>
    <recommendedName>
        <fullName evidence="1">Large ribosomal subunit protein bL25</fullName>
    </recommendedName>
    <alternativeName>
        <fullName evidence="3">50S ribosomal protein L25</fullName>
    </alternativeName>
    <alternativeName>
        <fullName evidence="1">General stress protein CTC</fullName>
    </alternativeName>
</protein>
<evidence type="ECO:0000255" key="1">
    <source>
        <dbReference type="HAMAP-Rule" id="MF_01334"/>
    </source>
</evidence>
<evidence type="ECO:0000256" key="2">
    <source>
        <dbReference type="SAM" id="MobiDB-lite"/>
    </source>
</evidence>
<evidence type="ECO:0000305" key="3"/>
<sequence length="206" mass="21815">MATTIKLEGEARSEFGKGVARRLRVANKIPATIYAGGEEPAFVTLPMRETTLALRHTNALFTIAFDGNTKMAVVKDVQKNPVKRIIEHVDFLEVKAGEKIDVEVPVFVEGTPKGAAVAFVDIQELKVRADVANLPEKIVVSVEGLTDGTKVFAKDVVLPEGVELDVEDPEESVVTVEVPEDASESTAAPEAAAPAADAAAPAADAK</sequence>
<gene>
    <name evidence="1" type="primary">rplY</name>
    <name evidence="1" type="synonym">ctc</name>
    <name type="ordered locus">BL0853</name>
</gene>
<comment type="function">
    <text evidence="1">This is one of the proteins that binds to the 5S RNA in the ribosome where it forms part of the central protuberance.</text>
</comment>
<comment type="subunit">
    <text evidence="1">Part of the 50S ribosomal subunit; part of the 5S rRNA/L5/L18/L25 subcomplex. Contacts the 5S rRNA. Binds to the 5S rRNA independently of L5 and L18.</text>
</comment>
<comment type="similarity">
    <text evidence="1">Belongs to the bacterial ribosomal protein bL25 family. CTC subfamily.</text>
</comment>
<organism>
    <name type="scientific">Bifidobacterium longum (strain NCC 2705)</name>
    <dbReference type="NCBI Taxonomy" id="206672"/>
    <lineage>
        <taxon>Bacteria</taxon>
        <taxon>Bacillati</taxon>
        <taxon>Actinomycetota</taxon>
        <taxon>Actinomycetes</taxon>
        <taxon>Bifidobacteriales</taxon>
        <taxon>Bifidobacteriaceae</taxon>
        <taxon>Bifidobacterium</taxon>
    </lineage>
</organism>
<proteinExistence type="inferred from homology"/>
<keyword id="KW-1185">Reference proteome</keyword>
<keyword id="KW-0687">Ribonucleoprotein</keyword>
<keyword id="KW-0689">Ribosomal protein</keyword>
<keyword id="KW-0694">RNA-binding</keyword>
<keyword id="KW-0699">rRNA-binding</keyword>
<name>RL25_BIFLO</name>
<accession>Q8G5Z8</accession>